<accession>Q3J6L7</accession>
<evidence type="ECO:0000255" key="1">
    <source>
        <dbReference type="HAMAP-Rule" id="MF_00227"/>
    </source>
</evidence>
<feature type="chain" id="PRO_1000078201" description="Ribonuclease P protein component">
    <location>
        <begin position="1"/>
        <end position="119"/>
    </location>
</feature>
<reference key="1">
    <citation type="journal article" date="2006" name="Appl. Environ. Microbiol.">
        <title>Complete genome sequence of the marine, chemolithoautotrophic, ammonia-oxidizing bacterium Nitrosococcus oceani ATCC 19707.</title>
        <authorList>
            <person name="Klotz M.G."/>
            <person name="Arp D.J."/>
            <person name="Chain P.S.G."/>
            <person name="El-Sheikh A.F."/>
            <person name="Hauser L.J."/>
            <person name="Hommes N.G."/>
            <person name="Larimer F.W."/>
            <person name="Malfatti S.A."/>
            <person name="Norton J.M."/>
            <person name="Poret-Peterson A.T."/>
            <person name="Vergez L.M."/>
            <person name="Ward B.B."/>
        </authorList>
    </citation>
    <scope>NUCLEOTIDE SEQUENCE [LARGE SCALE GENOMIC DNA]</scope>
    <source>
        <strain>ATCC 19707 / BCRC 17464 / JCM 30415 / NCIMB 11848 / C-107</strain>
    </source>
</reference>
<keyword id="KW-0255">Endonuclease</keyword>
<keyword id="KW-0378">Hydrolase</keyword>
<keyword id="KW-0540">Nuclease</keyword>
<keyword id="KW-1185">Reference proteome</keyword>
<keyword id="KW-0694">RNA-binding</keyword>
<keyword id="KW-0819">tRNA processing</keyword>
<name>RNPA_NITOC</name>
<gene>
    <name evidence="1" type="primary">rnpA</name>
    <name type="ordered locus">Noc_3088</name>
</gene>
<dbReference type="EC" id="3.1.26.5" evidence="1"/>
<dbReference type="EMBL" id="CP000127">
    <property type="protein sequence ID" value="ABA59529.1"/>
    <property type="molecule type" value="Genomic_DNA"/>
</dbReference>
<dbReference type="RefSeq" id="WP_002813960.1">
    <property type="nucleotide sequence ID" value="NC_007484.1"/>
</dbReference>
<dbReference type="SMR" id="Q3J6L7"/>
<dbReference type="FunCoup" id="Q3J6L7">
    <property type="interactions" value="118"/>
</dbReference>
<dbReference type="STRING" id="323261.Noc_3088"/>
<dbReference type="KEGG" id="noc:Noc_3088"/>
<dbReference type="eggNOG" id="COG0594">
    <property type="taxonomic scope" value="Bacteria"/>
</dbReference>
<dbReference type="HOGENOM" id="CLU_117179_11_0_6"/>
<dbReference type="InParanoid" id="Q3J6L7"/>
<dbReference type="Proteomes" id="UP000006838">
    <property type="component" value="Chromosome"/>
</dbReference>
<dbReference type="GO" id="GO:0030677">
    <property type="term" value="C:ribonuclease P complex"/>
    <property type="evidence" value="ECO:0007669"/>
    <property type="project" value="TreeGrafter"/>
</dbReference>
<dbReference type="GO" id="GO:0042781">
    <property type="term" value="F:3'-tRNA processing endoribonuclease activity"/>
    <property type="evidence" value="ECO:0007669"/>
    <property type="project" value="TreeGrafter"/>
</dbReference>
<dbReference type="GO" id="GO:0004526">
    <property type="term" value="F:ribonuclease P activity"/>
    <property type="evidence" value="ECO:0007669"/>
    <property type="project" value="UniProtKB-UniRule"/>
</dbReference>
<dbReference type="GO" id="GO:0000049">
    <property type="term" value="F:tRNA binding"/>
    <property type="evidence" value="ECO:0007669"/>
    <property type="project" value="UniProtKB-UniRule"/>
</dbReference>
<dbReference type="GO" id="GO:0001682">
    <property type="term" value="P:tRNA 5'-leader removal"/>
    <property type="evidence" value="ECO:0007669"/>
    <property type="project" value="UniProtKB-UniRule"/>
</dbReference>
<dbReference type="Gene3D" id="3.30.230.10">
    <property type="match status" value="1"/>
</dbReference>
<dbReference type="HAMAP" id="MF_00227">
    <property type="entry name" value="RNase_P"/>
    <property type="match status" value="1"/>
</dbReference>
<dbReference type="InterPro" id="IPR020568">
    <property type="entry name" value="Ribosomal_Su5_D2-typ_SF"/>
</dbReference>
<dbReference type="InterPro" id="IPR014721">
    <property type="entry name" value="Ribsml_uS5_D2-typ_fold_subgr"/>
</dbReference>
<dbReference type="InterPro" id="IPR000100">
    <property type="entry name" value="RNase_P"/>
</dbReference>
<dbReference type="InterPro" id="IPR020539">
    <property type="entry name" value="RNase_P_CS"/>
</dbReference>
<dbReference type="NCBIfam" id="TIGR00188">
    <property type="entry name" value="rnpA"/>
    <property type="match status" value="1"/>
</dbReference>
<dbReference type="PANTHER" id="PTHR33992">
    <property type="entry name" value="RIBONUCLEASE P PROTEIN COMPONENT"/>
    <property type="match status" value="1"/>
</dbReference>
<dbReference type="PANTHER" id="PTHR33992:SF1">
    <property type="entry name" value="RIBONUCLEASE P PROTEIN COMPONENT"/>
    <property type="match status" value="1"/>
</dbReference>
<dbReference type="Pfam" id="PF00825">
    <property type="entry name" value="Ribonuclease_P"/>
    <property type="match status" value="1"/>
</dbReference>
<dbReference type="SUPFAM" id="SSF54211">
    <property type="entry name" value="Ribosomal protein S5 domain 2-like"/>
    <property type="match status" value="1"/>
</dbReference>
<dbReference type="PROSITE" id="PS00648">
    <property type="entry name" value="RIBONUCLEASE_P"/>
    <property type="match status" value="1"/>
</dbReference>
<protein>
    <recommendedName>
        <fullName evidence="1">Ribonuclease P protein component</fullName>
        <shortName evidence="1">RNase P protein</shortName>
        <shortName evidence="1">RNaseP protein</shortName>
        <ecNumber evidence="1">3.1.26.5</ecNumber>
    </recommendedName>
    <alternativeName>
        <fullName evidence="1">Protein C5</fullName>
    </alternativeName>
</protein>
<sequence>MKQFGFTRLMRLVDPGDFKQIFAAGERVSSKAFTVLYHSNSLEYPRLGMAIPRKHFSRAVDRNRIKRLVRESFRQRQQVLGGRDLVVLSKPGINRHPNSDLLRCLERQWIGLVKQCSDS</sequence>
<organism>
    <name type="scientific">Nitrosococcus oceani (strain ATCC 19707 / BCRC 17464 / JCM 30415 / NCIMB 11848 / C-107)</name>
    <dbReference type="NCBI Taxonomy" id="323261"/>
    <lineage>
        <taxon>Bacteria</taxon>
        <taxon>Pseudomonadati</taxon>
        <taxon>Pseudomonadota</taxon>
        <taxon>Gammaproteobacteria</taxon>
        <taxon>Chromatiales</taxon>
        <taxon>Chromatiaceae</taxon>
        <taxon>Nitrosococcus</taxon>
    </lineage>
</organism>
<proteinExistence type="inferred from homology"/>
<comment type="function">
    <text evidence="1">RNaseP catalyzes the removal of the 5'-leader sequence from pre-tRNA to produce the mature 5'-terminus. It can also cleave other RNA substrates such as 4.5S RNA. The protein component plays an auxiliary but essential role in vivo by binding to the 5'-leader sequence and broadening the substrate specificity of the ribozyme.</text>
</comment>
<comment type="catalytic activity">
    <reaction evidence="1">
        <text>Endonucleolytic cleavage of RNA, removing 5'-extranucleotides from tRNA precursor.</text>
        <dbReference type="EC" id="3.1.26.5"/>
    </reaction>
</comment>
<comment type="subunit">
    <text evidence="1">Consists of a catalytic RNA component (M1 or rnpB) and a protein subunit.</text>
</comment>
<comment type="similarity">
    <text evidence="1">Belongs to the RnpA family.</text>
</comment>